<comment type="function">
    <text evidence="3 4 9">Mediates and enhances the nuclear envelope docking of RANGAP proteins mediated by WIT1 and WIT2 in the undifferentiated cells of root tips (PubMed:17600715, PubMed:18591351). As component of the SUN-WIP-WIT2-KAKU1 complex, mediates the transfer of cytoplasmic forces to the nuclear envelope (NE), leading to nuclear shape changes (PubMed:25759303).</text>
</comment>
<comment type="subunit">
    <text evidence="3 4 5 6 7 8 9">Homodimer and heterodimer with WIP2. Component of Ran complexes at least composed of WIT1 or WIT2, RANGAP1 or RANGAP2, and WIP1 or WIP2 or WIP3. Interacts with RANGAP1, RANGAP2, WPP1/MAF1, and WPP2/MAF2 (PubMed:17600715, PubMed:18591351). Interacts with SUN1 and SUN2 (PubMed:22270916). Interacts with KIN1 (PubMed:25330379). Core component of the LINC complex which is composed of inner nuclear membrane SUN domain-containing proteins coupled to outer nuclear membrane WIP and WIT proteins. The LINC complex also involves nucleoskeletal proteins CRWN/LINC and possibly KAKU4 and the cytoskeletal myosin KAKU1 (PubMed:25759303). Interacts with WIT1 and SUN2 (PubMed:23973298). Interacts with WIT2 (PubMed:25759303). Interacts with SUN3 (PubMed:25217773).</text>
</comment>
<comment type="interaction">
    <interactant intactId="EBI-1779367">
        <id>Q8GXA4</id>
    </interactant>
    <interactant intactId="EBI-2349513">
        <id>Q84MC7</id>
        <label>PYL9</label>
    </interactant>
    <organismsDiffer>false</organismsDiffer>
    <experiments>3</experiments>
</comment>
<comment type="interaction">
    <interactant intactId="EBI-1779367">
        <id>Q8GXA4</id>
    </interactant>
    <interactant intactId="EBI-1779351">
        <id>Q9LE82</id>
        <label>RANGAP1</label>
    </interactant>
    <organismsDiffer>false</organismsDiffer>
    <experiments>6</experiments>
</comment>
<comment type="interaction">
    <interactant intactId="EBI-1779367">
        <id>Q8GXA4</id>
    </interactant>
    <interactant intactId="EBI-1779466">
        <id>Q9FH18</id>
        <label>WIP2</label>
    </interactant>
    <organismsDiffer>false</organismsDiffer>
    <experiments>3</experiments>
</comment>
<comment type="interaction">
    <interactant intactId="EBI-1779367">
        <id>Q8GXA4</id>
    </interactant>
    <interactant intactId="EBI-1796628">
        <id>Q8L7E5</id>
        <label>WIT1</label>
    </interactant>
    <organismsDiffer>false</organismsDiffer>
    <experiments>4</experiments>
</comment>
<comment type="subcellular location">
    <subcellularLocation>
        <location evidence="3 5">Nucleus envelope</location>
    </subcellularLocation>
    <subcellularLocation>
        <location evidence="3">Nucleus membrane</location>
        <topology evidence="3">Single-pass membrane protein</topology>
        <orientation evidence="3">Cytoplasmic side</orientation>
    </subcellularLocation>
    <text>Targeted to the nuclear envelope (NE) during interphase. Associated to the cell plate during cytokinesis in root tips.</text>
</comment>
<comment type="tissue specificity">
    <text evidence="3">Expressed in seedlings, roots, stems, leaves, and flowers.</text>
</comment>
<comment type="developmental stage">
    <text evidence="3">First observed in roots and cotyledons of young developing seedlings. Later confined to root tips, vascular tissue around the shoot apex, and in young leaf primodia. In flowers, detected in the stamens and at the senescence region of developing siliques.</text>
</comment>
<comment type="domain">
    <text evidence="11">The KASH domain, which contains a transmembrane domain, mediates the nuclear envelope targeting and is involved in the binding to the SUN proteins.</text>
</comment>
<comment type="sequence caution" evidence="10">
    <conflict type="erroneous gene model prediction">
        <sequence resource="EMBL-CDS" id="CAA18225"/>
    </conflict>
    <text>The predicted gene has been split into 2 genes: At4g26450 and At4g26455.</text>
</comment>
<comment type="sequence caution" evidence="10">
    <conflict type="erroneous gene model prediction">
        <sequence resource="EMBL-CDS" id="CAB79500"/>
    </conflict>
    <text>The predicted gene has been split into 2 genes: At4g26450 and At4g26455.</text>
</comment>
<protein>
    <recommendedName>
        <fullName>WPP domain-interacting protein 1</fullName>
    </recommendedName>
</protein>
<keyword id="KW-0175">Coiled coil</keyword>
<keyword id="KW-0472">Membrane</keyword>
<keyword id="KW-0539">Nucleus</keyword>
<keyword id="KW-1185">Reference proteome</keyword>
<keyword id="KW-0812">Transmembrane</keyword>
<keyword id="KW-1133">Transmembrane helix</keyword>
<evidence type="ECO:0000255" key="1"/>
<evidence type="ECO:0000256" key="2">
    <source>
        <dbReference type="SAM" id="MobiDB-lite"/>
    </source>
</evidence>
<evidence type="ECO:0000269" key="3">
    <source>
    </source>
</evidence>
<evidence type="ECO:0000269" key="4">
    <source>
    </source>
</evidence>
<evidence type="ECO:0000269" key="5">
    <source>
    </source>
</evidence>
<evidence type="ECO:0000269" key="6">
    <source>
    </source>
</evidence>
<evidence type="ECO:0000269" key="7">
    <source>
    </source>
</evidence>
<evidence type="ECO:0000269" key="8">
    <source>
    </source>
</evidence>
<evidence type="ECO:0000269" key="9">
    <source>
    </source>
</evidence>
<evidence type="ECO:0000305" key="10"/>
<evidence type="ECO:0000305" key="11">
    <source>
    </source>
</evidence>
<dbReference type="EMBL" id="EF554923">
    <property type="protein sequence ID" value="ABU43100.1"/>
    <property type="molecule type" value="mRNA"/>
</dbReference>
<dbReference type="EMBL" id="AL022223">
    <property type="protein sequence ID" value="CAA18225.1"/>
    <property type="status" value="ALT_SEQ"/>
    <property type="molecule type" value="Genomic_DNA"/>
</dbReference>
<dbReference type="EMBL" id="AL161565">
    <property type="protein sequence ID" value="CAB79500.1"/>
    <property type="status" value="ALT_SEQ"/>
    <property type="molecule type" value="Genomic_DNA"/>
</dbReference>
<dbReference type="EMBL" id="CP002687">
    <property type="protein sequence ID" value="AEE85201.1"/>
    <property type="molecule type" value="Genomic_DNA"/>
</dbReference>
<dbReference type="EMBL" id="AK118341">
    <property type="protein sequence ID" value="BAC42955.1"/>
    <property type="molecule type" value="mRNA"/>
</dbReference>
<dbReference type="EMBL" id="BT003145">
    <property type="protein sequence ID" value="AAO24577.1"/>
    <property type="molecule type" value="mRNA"/>
</dbReference>
<dbReference type="EMBL" id="AK228147">
    <property type="protein sequence ID" value="BAF00103.1"/>
    <property type="molecule type" value="mRNA"/>
</dbReference>
<dbReference type="PIR" id="T05059">
    <property type="entry name" value="T05059"/>
</dbReference>
<dbReference type="RefSeq" id="NP_001154269.1">
    <property type="nucleotide sequence ID" value="NM_001160797.2"/>
</dbReference>
<dbReference type="SMR" id="Q8GXA4"/>
<dbReference type="BioGRID" id="927646">
    <property type="interactions" value="8"/>
</dbReference>
<dbReference type="DIP" id="DIP-46425N"/>
<dbReference type="FunCoup" id="Q8GXA4">
    <property type="interactions" value="528"/>
</dbReference>
<dbReference type="IntAct" id="Q8GXA4">
    <property type="interactions" value="71"/>
</dbReference>
<dbReference type="STRING" id="3702.Q8GXA4"/>
<dbReference type="iPTMnet" id="Q8GXA4"/>
<dbReference type="PaxDb" id="3702-AT4G26455.1"/>
<dbReference type="ProteomicsDB" id="242642"/>
<dbReference type="EnsemblPlants" id="AT4G26455.1">
    <property type="protein sequence ID" value="AT4G26455.1"/>
    <property type="gene ID" value="AT4G26455"/>
</dbReference>
<dbReference type="GeneID" id="7922386"/>
<dbReference type="Gramene" id="AT4G26455.1">
    <property type="protein sequence ID" value="AT4G26455.1"/>
    <property type="gene ID" value="AT4G26455"/>
</dbReference>
<dbReference type="KEGG" id="ath:AT4G26455"/>
<dbReference type="Araport" id="AT4G26455"/>
<dbReference type="TAIR" id="AT4G26455">
    <property type="gene designation" value="WIP1"/>
</dbReference>
<dbReference type="eggNOG" id="ENOG502QTZN">
    <property type="taxonomic scope" value="Eukaryota"/>
</dbReference>
<dbReference type="HOGENOM" id="CLU_057777_0_0_1"/>
<dbReference type="InParanoid" id="Q8GXA4"/>
<dbReference type="OMA" id="MQRRVCK"/>
<dbReference type="OrthoDB" id="680851at2759"/>
<dbReference type="PhylomeDB" id="Q8GXA4"/>
<dbReference type="PRO" id="PR:Q8GXA4"/>
<dbReference type="Proteomes" id="UP000006548">
    <property type="component" value="Chromosome 4"/>
</dbReference>
<dbReference type="ExpressionAtlas" id="Q8GXA4">
    <property type="expression patterns" value="baseline and differential"/>
</dbReference>
<dbReference type="GO" id="GO:0009504">
    <property type="term" value="C:cell plate"/>
    <property type="evidence" value="ECO:0000314"/>
    <property type="project" value="TAIR"/>
</dbReference>
<dbReference type="GO" id="GO:0005635">
    <property type="term" value="C:nuclear envelope"/>
    <property type="evidence" value="ECO:0000314"/>
    <property type="project" value="UniProtKB"/>
</dbReference>
<dbReference type="GO" id="GO:0031965">
    <property type="term" value="C:nuclear membrane"/>
    <property type="evidence" value="ECO:0007669"/>
    <property type="project" value="UniProtKB-SubCell"/>
</dbReference>
<dbReference type="GO" id="GO:0046982">
    <property type="term" value="F:protein heterodimerization activity"/>
    <property type="evidence" value="ECO:0000353"/>
    <property type="project" value="TAIR"/>
</dbReference>
<dbReference type="GO" id="GO:0042803">
    <property type="term" value="F:protein homodimerization activity"/>
    <property type="evidence" value="ECO:0000353"/>
    <property type="project" value="TAIR"/>
</dbReference>
<dbReference type="GO" id="GO:0006997">
    <property type="term" value="P:nucleus organization"/>
    <property type="evidence" value="ECO:0000316"/>
    <property type="project" value="TAIR"/>
</dbReference>
<dbReference type="InterPro" id="IPR044696">
    <property type="entry name" value="WIP1/2/3"/>
</dbReference>
<dbReference type="PANTHER" id="PTHR34562:SF8">
    <property type="entry name" value="WPP DOMAIN-INTERACTING PROTEIN 1"/>
    <property type="match status" value="1"/>
</dbReference>
<dbReference type="PANTHER" id="PTHR34562">
    <property type="entry name" value="WPP DOMAIN-INTERACTING PROTEIN 2"/>
    <property type="match status" value="1"/>
</dbReference>
<sequence>MDLESESSALESVDDNVLIQQSASNVCDDGRSLDNGSCSDESVKLLSTSNSVELGKPMSFDSPGDGGGAYSPVLKGQGLRKWRRIRRDLVKDTSANMENSKALKRGLSGVAHSHGKQMQFQSPEVEQESQGSVGSVNMLKSSGDGFDILGSSGYDSRFVAGVGFSAGMDLEIDDDRSSKSSTVARAPKVIRYEKPMISSGQGGNIRVENSKKHRGESVDFEKENSYSSLESDSRKQSGRMMDYNGENGETSMRKDDAGGEGGESINTDNRYSDEMDPLTEAINGFLALQDALEKEVQQFQEIGNEPMPQHHEQVSEANSPHPEIVTLVNNVEQLENMLEETRSMLEVKESHIRDLESTTNQSKHSWGGTEIVVEDIFRQKIEAEIEYLIYSRSIDNLNSQMKLIDEQESLAEEQTHETLNKLGRVQTKAANFTNRAQDLQNDCIEITGTIKKRACKITSYVLIQLVLLSTVVLLLLSQLLPEPDTVVPT</sequence>
<gene>
    <name type="primary">WIP1</name>
    <name type="ordered locus">At4g26455</name>
    <name type="ORF">M3E9.120</name>
</gene>
<accession>Q8GXA4</accession>
<accession>O65589</accession>
<feature type="chain" id="PRO_0000347196" description="WPP domain-interacting protein 1">
    <location>
        <begin position="1"/>
        <end position="489"/>
    </location>
</feature>
<feature type="transmembrane region" description="Helical" evidence="1">
    <location>
        <begin position="460"/>
        <end position="480"/>
    </location>
</feature>
<feature type="domain" description="KASH" evidence="11">
    <location>
        <begin position="459"/>
        <end position="489"/>
    </location>
</feature>
<feature type="region of interest" description="Disordered" evidence="2">
    <location>
        <begin position="49"/>
        <end position="73"/>
    </location>
</feature>
<feature type="region of interest" description="Disordered" evidence="2">
    <location>
        <begin position="195"/>
        <end position="264"/>
    </location>
</feature>
<feature type="coiled-coil region" evidence="1">
    <location>
        <begin position="323"/>
        <end position="446"/>
    </location>
</feature>
<feature type="short sequence motif" description="Nuclear localization signal 1" evidence="3">
    <location>
        <begin position="80"/>
        <end position="81"/>
    </location>
</feature>
<feature type="short sequence motif" description="Nuclear localization signal 2" evidence="3">
    <location>
        <begin position="83"/>
        <end position="84"/>
    </location>
</feature>
<feature type="short sequence motif" description="Nuclear localization signal 3" evidence="3">
    <location>
        <begin position="104"/>
        <end position="105"/>
    </location>
</feature>
<feature type="compositionally biased region" description="Basic and acidic residues" evidence="2">
    <location>
        <begin position="215"/>
        <end position="224"/>
    </location>
</feature>
<organism>
    <name type="scientific">Arabidopsis thaliana</name>
    <name type="common">Mouse-ear cress</name>
    <dbReference type="NCBI Taxonomy" id="3702"/>
    <lineage>
        <taxon>Eukaryota</taxon>
        <taxon>Viridiplantae</taxon>
        <taxon>Streptophyta</taxon>
        <taxon>Embryophyta</taxon>
        <taxon>Tracheophyta</taxon>
        <taxon>Spermatophyta</taxon>
        <taxon>Magnoliopsida</taxon>
        <taxon>eudicotyledons</taxon>
        <taxon>Gunneridae</taxon>
        <taxon>Pentapetalae</taxon>
        <taxon>rosids</taxon>
        <taxon>malvids</taxon>
        <taxon>Brassicales</taxon>
        <taxon>Brassicaceae</taxon>
        <taxon>Camelineae</taxon>
        <taxon>Arabidopsis</taxon>
    </lineage>
</organism>
<name>WIP1_ARATH</name>
<reference key="1">
    <citation type="submission" date="2007-04" db="EMBL/GenBank/DDBJ databases">
        <title>The kingdom- and tissue-specific anchorage of plant RanGAP to the nuclear envelope involves a novel family of plant nuclear pore-associated transmembrane proteins.</title>
        <authorList>
            <person name="Xu X.M."/>
            <person name="Meulia T."/>
            <person name="Meier I."/>
        </authorList>
    </citation>
    <scope>NUCLEOTIDE SEQUENCE [MRNA]</scope>
</reference>
<reference key="2">
    <citation type="journal article" date="1999" name="Nature">
        <title>Sequence and analysis of chromosome 4 of the plant Arabidopsis thaliana.</title>
        <authorList>
            <person name="Mayer K.F.X."/>
            <person name="Schueller C."/>
            <person name="Wambutt R."/>
            <person name="Murphy G."/>
            <person name="Volckaert G."/>
            <person name="Pohl T."/>
            <person name="Duesterhoeft A."/>
            <person name="Stiekema W."/>
            <person name="Entian K.-D."/>
            <person name="Terryn N."/>
            <person name="Harris B."/>
            <person name="Ansorge W."/>
            <person name="Brandt P."/>
            <person name="Grivell L.A."/>
            <person name="Rieger M."/>
            <person name="Weichselgartner M."/>
            <person name="de Simone V."/>
            <person name="Obermaier B."/>
            <person name="Mache R."/>
            <person name="Mueller M."/>
            <person name="Kreis M."/>
            <person name="Delseny M."/>
            <person name="Puigdomenech P."/>
            <person name="Watson M."/>
            <person name="Schmidtheini T."/>
            <person name="Reichert B."/>
            <person name="Portetelle D."/>
            <person name="Perez-Alonso M."/>
            <person name="Boutry M."/>
            <person name="Bancroft I."/>
            <person name="Vos P."/>
            <person name="Hoheisel J."/>
            <person name="Zimmermann W."/>
            <person name="Wedler H."/>
            <person name="Ridley P."/>
            <person name="Langham S.-A."/>
            <person name="McCullagh B."/>
            <person name="Bilham L."/>
            <person name="Robben J."/>
            <person name="van der Schueren J."/>
            <person name="Grymonprez B."/>
            <person name="Chuang Y.-J."/>
            <person name="Vandenbussche F."/>
            <person name="Braeken M."/>
            <person name="Weltjens I."/>
            <person name="Voet M."/>
            <person name="Bastiaens I."/>
            <person name="Aert R."/>
            <person name="Defoor E."/>
            <person name="Weitzenegger T."/>
            <person name="Bothe G."/>
            <person name="Ramsperger U."/>
            <person name="Hilbert H."/>
            <person name="Braun M."/>
            <person name="Holzer E."/>
            <person name="Brandt A."/>
            <person name="Peters S."/>
            <person name="van Staveren M."/>
            <person name="Dirkse W."/>
            <person name="Mooijman P."/>
            <person name="Klein Lankhorst R."/>
            <person name="Rose M."/>
            <person name="Hauf J."/>
            <person name="Koetter P."/>
            <person name="Berneiser S."/>
            <person name="Hempel S."/>
            <person name="Feldpausch M."/>
            <person name="Lamberth S."/>
            <person name="Van den Daele H."/>
            <person name="De Keyser A."/>
            <person name="Buysshaert C."/>
            <person name="Gielen J."/>
            <person name="Villarroel R."/>
            <person name="De Clercq R."/>
            <person name="van Montagu M."/>
            <person name="Rogers J."/>
            <person name="Cronin A."/>
            <person name="Quail M.A."/>
            <person name="Bray-Allen S."/>
            <person name="Clark L."/>
            <person name="Doggett J."/>
            <person name="Hall S."/>
            <person name="Kay M."/>
            <person name="Lennard N."/>
            <person name="McLay K."/>
            <person name="Mayes R."/>
            <person name="Pettett A."/>
            <person name="Rajandream M.A."/>
            <person name="Lyne M."/>
            <person name="Benes V."/>
            <person name="Rechmann S."/>
            <person name="Borkova D."/>
            <person name="Bloecker H."/>
            <person name="Scharfe M."/>
            <person name="Grimm M."/>
            <person name="Loehnert T.-H."/>
            <person name="Dose S."/>
            <person name="de Haan M."/>
            <person name="Maarse A.C."/>
            <person name="Schaefer M."/>
            <person name="Mueller-Auer S."/>
            <person name="Gabel C."/>
            <person name="Fuchs M."/>
            <person name="Fartmann B."/>
            <person name="Granderath K."/>
            <person name="Dauner D."/>
            <person name="Herzl A."/>
            <person name="Neumann S."/>
            <person name="Argiriou A."/>
            <person name="Vitale D."/>
            <person name="Liguori R."/>
            <person name="Piravandi E."/>
            <person name="Massenet O."/>
            <person name="Quigley F."/>
            <person name="Clabauld G."/>
            <person name="Muendlein A."/>
            <person name="Felber R."/>
            <person name="Schnabl S."/>
            <person name="Hiller R."/>
            <person name="Schmidt W."/>
            <person name="Lecharny A."/>
            <person name="Aubourg S."/>
            <person name="Chefdor F."/>
            <person name="Cooke R."/>
            <person name="Berger C."/>
            <person name="Monfort A."/>
            <person name="Casacuberta E."/>
            <person name="Gibbons T."/>
            <person name="Weber N."/>
            <person name="Vandenbol M."/>
            <person name="Bargues M."/>
            <person name="Terol J."/>
            <person name="Torres A."/>
            <person name="Perez-Perez A."/>
            <person name="Purnelle B."/>
            <person name="Bent E."/>
            <person name="Johnson S."/>
            <person name="Tacon D."/>
            <person name="Jesse T."/>
            <person name="Heijnen L."/>
            <person name="Schwarz S."/>
            <person name="Scholler P."/>
            <person name="Heber S."/>
            <person name="Francs P."/>
            <person name="Bielke C."/>
            <person name="Frishman D."/>
            <person name="Haase D."/>
            <person name="Lemcke K."/>
            <person name="Mewes H.-W."/>
            <person name="Stocker S."/>
            <person name="Zaccaria P."/>
            <person name="Bevan M."/>
            <person name="Wilson R.K."/>
            <person name="de la Bastide M."/>
            <person name="Habermann K."/>
            <person name="Parnell L."/>
            <person name="Dedhia N."/>
            <person name="Gnoj L."/>
            <person name="Schutz K."/>
            <person name="Huang E."/>
            <person name="Spiegel L."/>
            <person name="Sekhon M."/>
            <person name="Murray J."/>
            <person name="Sheet P."/>
            <person name="Cordes M."/>
            <person name="Abu-Threideh J."/>
            <person name="Stoneking T."/>
            <person name="Kalicki J."/>
            <person name="Graves T."/>
            <person name="Harmon G."/>
            <person name="Edwards J."/>
            <person name="Latreille P."/>
            <person name="Courtney L."/>
            <person name="Cloud J."/>
            <person name="Abbott A."/>
            <person name="Scott K."/>
            <person name="Johnson D."/>
            <person name="Minx P."/>
            <person name="Bentley D."/>
            <person name="Fulton B."/>
            <person name="Miller N."/>
            <person name="Greco T."/>
            <person name="Kemp K."/>
            <person name="Kramer J."/>
            <person name="Fulton L."/>
            <person name="Mardis E."/>
            <person name="Dante M."/>
            <person name="Pepin K."/>
            <person name="Hillier L.W."/>
            <person name="Nelson J."/>
            <person name="Spieth J."/>
            <person name="Ryan E."/>
            <person name="Andrews S."/>
            <person name="Geisel C."/>
            <person name="Layman D."/>
            <person name="Du H."/>
            <person name="Ali J."/>
            <person name="Berghoff A."/>
            <person name="Jones K."/>
            <person name="Drone K."/>
            <person name="Cotton M."/>
            <person name="Joshu C."/>
            <person name="Antonoiu B."/>
            <person name="Zidanic M."/>
            <person name="Strong C."/>
            <person name="Sun H."/>
            <person name="Lamar B."/>
            <person name="Yordan C."/>
            <person name="Ma P."/>
            <person name="Zhong J."/>
            <person name="Preston R."/>
            <person name="Vil D."/>
            <person name="Shekher M."/>
            <person name="Matero A."/>
            <person name="Shah R."/>
            <person name="Swaby I.K."/>
            <person name="O'Shaughnessy A."/>
            <person name="Rodriguez M."/>
            <person name="Hoffman J."/>
            <person name="Till S."/>
            <person name="Granat S."/>
            <person name="Shohdy N."/>
            <person name="Hasegawa A."/>
            <person name="Hameed A."/>
            <person name="Lodhi M."/>
            <person name="Johnson A."/>
            <person name="Chen E."/>
            <person name="Marra M.A."/>
            <person name="Martienssen R."/>
            <person name="McCombie W.R."/>
        </authorList>
    </citation>
    <scope>NUCLEOTIDE SEQUENCE [LARGE SCALE GENOMIC DNA]</scope>
    <source>
        <strain>cv. Columbia</strain>
    </source>
</reference>
<reference key="3">
    <citation type="journal article" date="2017" name="Plant J.">
        <title>Araport11: a complete reannotation of the Arabidopsis thaliana reference genome.</title>
        <authorList>
            <person name="Cheng C.Y."/>
            <person name="Krishnakumar V."/>
            <person name="Chan A.P."/>
            <person name="Thibaud-Nissen F."/>
            <person name="Schobel S."/>
            <person name="Town C.D."/>
        </authorList>
    </citation>
    <scope>GENOME REANNOTATION</scope>
    <source>
        <strain>cv. Columbia</strain>
    </source>
</reference>
<reference key="4">
    <citation type="journal article" date="2002" name="Science">
        <title>Functional annotation of a full-length Arabidopsis cDNA collection.</title>
        <authorList>
            <person name="Seki M."/>
            <person name="Narusaka M."/>
            <person name="Kamiya A."/>
            <person name="Ishida J."/>
            <person name="Satou M."/>
            <person name="Sakurai T."/>
            <person name="Nakajima M."/>
            <person name="Enju A."/>
            <person name="Akiyama K."/>
            <person name="Oono Y."/>
            <person name="Muramatsu M."/>
            <person name="Hayashizaki Y."/>
            <person name="Kawai J."/>
            <person name="Carninci P."/>
            <person name="Itoh M."/>
            <person name="Ishii Y."/>
            <person name="Arakawa T."/>
            <person name="Shibata K."/>
            <person name="Shinagawa A."/>
            <person name="Shinozaki K."/>
        </authorList>
    </citation>
    <scope>NUCLEOTIDE SEQUENCE [LARGE SCALE MRNA]</scope>
    <source>
        <strain>cv. Columbia</strain>
    </source>
</reference>
<reference key="5">
    <citation type="journal article" date="2003" name="Science">
        <title>Empirical analysis of transcriptional activity in the Arabidopsis genome.</title>
        <authorList>
            <person name="Yamada K."/>
            <person name="Lim J."/>
            <person name="Dale J.M."/>
            <person name="Chen H."/>
            <person name="Shinn P."/>
            <person name="Palm C.J."/>
            <person name="Southwick A.M."/>
            <person name="Wu H.C."/>
            <person name="Kim C.J."/>
            <person name="Nguyen M."/>
            <person name="Pham P.K."/>
            <person name="Cheuk R.F."/>
            <person name="Karlin-Newmann G."/>
            <person name="Liu S.X."/>
            <person name="Lam B."/>
            <person name="Sakano H."/>
            <person name="Wu T."/>
            <person name="Yu G."/>
            <person name="Miranda M."/>
            <person name="Quach H.L."/>
            <person name="Tripp M."/>
            <person name="Chang C.H."/>
            <person name="Lee J.M."/>
            <person name="Toriumi M.J."/>
            <person name="Chan M.M."/>
            <person name="Tang C.C."/>
            <person name="Onodera C.S."/>
            <person name="Deng J.M."/>
            <person name="Akiyama K."/>
            <person name="Ansari Y."/>
            <person name="Arakawa T."/>
            <person name="Banh J."/>
            <person name="Banno F."/>
            <person name="Bowser L."/>
            <person name="Brooks S.Y."/>
            <person name="Carninci P."/>
            <person name="Chao Q."/>
            <person name="Choy N."/>
            <person name="Enju A."/>
            <person name="Goldsmith A.D."/>
            <person name="Gurjal M."/>
            <person name="Hansen N.F."/>
            <person name="Hayashizaki Y."/>
            <person name="Johnson-Hopson C."/>
            <person name="Hsuan V.W."/>
            <person name="Iida K."/>
            <person name="Karnes M."/>
            <person name="Khan S."/>
            <person name="Koesema E."/>
            <person name="Ishida J."/>
            <person name="Jiang P.X."/>
            <person name="Jones T."/>
            <person name="Kawai J."/>
            <person name="Kamiya A."/>
            <person name="Meyers C."/>
            <person name="Nakajima M."/>
            <person name="Narusaka M."/>
            <person name="Seki M."/>
            <person name="Sakurai T."/>
            <person name="Satou M."/>
            <person name="Tamse R."/>
            <person name="Vaysberg M."/>
            <person name="Wallender E.K."/>
            <person name="Wong C."/>
            <person name="Yamamura Y."/>
            <person name="Yuan S."/>
            <person name="Shinozaki K."/>
            <person name="Davis R.W."/>
            <person name="Theologis A."/>
            <person name="Ecker J.R."/>
        </authorList>
    </citation>
    <scope>NUCLEOTIDE SEQUENCE [LARGE SCALE MRNA]</scope>
    <source>
        <strain>cv. Columbia</strain>
    </source>
</reference>
<reference key="6">
    <citation type="submission" date="2006-07" db="EMBL/GenBank/DDBJ databases">
        <title>Large-scale analysis of RIKEN Arabidopsis full-length (RAFL) cDNAs.</title>
        <authorList>
            <person name="Totoki Y."/>
            <person name="Seki M."/>
            <person name="Ishida J."/>
            <person name="Nakajima M."/>
            <person name="Enju A."/>
            <person name="Kamiya A."/>
            <person name="Narusaka M."/>
            <person name="Shin-i T."/>
            <person name="Nakagawa M."/>
            <person name="Sakamoto N."/>
            <person name="Oishi K."/>
            <person name="Kohara Y."/>
            <person name="Kobayashi M."/>
            <person name="Toyoda A."/>
            <person name="Sakaki Y."/>
            <person name="Sakurai T."/>
            <person name="Iida K."/>
            <person name="Akiyama K."/>
            <person name="Satou M."/>
            <person name="Toyoda T."/>
            <person name="Konagaya A."/>
            <person name="Carninci P."/>
            <person name="Kawai J."/>
            <person name="Hayashizaki Y."/>
            <person name="Shinozaki K."/>
        </authorList>
    </citation>
    <scope>NUCLEOTIDE SEQUENCE [LARGE SCALE MRNA]</scope>
    <source>
        <strain>cv. Columbia</strain>
    </source>
</reference>
<reference key="7">
    <citation type="journal article" date="2008" name="Plant Cell">
        <title>Two distinct interacting classes of nuclear envelope-associated coiled-coil proteins are required for the tissue-specific nuclear envelope targeting of Arabidopsis RanGAP.</title>
        <authorList>
            <person name="Zhao Q."/>
            <person name="Brkljacic J."/>
            <person name="Meier I."/>
        </authorList>
    </citation>
    <scope>FUNCTION</scope>
    <scope>SUBUNIT</scope>
</reference>
<reference key="8">
    <citation type="journal article" date="2007" name="Curr. Biol.">
        <title>Anchorage of plant RanGAP to the nuclear envelope involves novel nuclear-pore-associated proteins.</title>
        <authorList>
            <person name="Xu X.M."/>
            <person name="Meulia T."/>
            <person name="Meier I."/>
        </authorList>
    </citation>
    <scope>FUNCTION</scope>
    <scope>TISSUE SPECIFICITY</scope>
    <scope>DEVELOPMENTAL STAGE</scope>
    <scope>SUBCELLULAR LOCATION</scope>
    <scope>INTERACTION WITH WPP1; WPP2; RANGAP1 AND RANGAP2</scope>
    <scope>NUCLEAR LOCALIZATION SIGNAL</scope>
    <scope>DIMERIZATION</scope>
</reference>
<reference key="9">
    <citation type="journal article" date="2012" name="J. Cell Biol.">
        <title>Novel plant SUN-KASH bridges are involved in RanGAP anchoring and nuclear shape determination.</title>
        <authorList>
            <person name="Zhou X."/>
            <person name="Graumann K."/>
            <person name="Evans D.E."/>
            <person name="Meier I."/>
        </authorList>
    </citation>
    <scope>INTERACTION WITH SUN1 AND SUN2</scope>
    <scope>SUBCELLULAR LOCATION</scope>
    <source>
        <strain>cv. Columbia</strain>
    </source>
</reference>
<reference key="10">
    <citation type="journal article" date="2013" name="Curr. Biol.">
        <title>Myosin XI-i links the nuclear membrane to the cytoskeleton to control nuclear movement and shape in Arabidopsis.</title>
        <authorList>
            <person name="Tamura K."/>
            <person name="Iwabuchi K."/>
            <person name="Fukao Y."/>
            <person name="Kondo M."/>
            <person name="Okamoto K."/>
            <person name="Ueda H."/>
            <person name="Nishimura M."/>
            <person name="Hara-Nishimura I."/>
        </authorList>
    </citation>
    <scope>INTERACTION WITH WIT1 AND SUN2</scope>
</reference>
<reference key="11">
    <citation type="journal article" date="2014" name="J. Exp. Bot.">
        <title>Characterization of two distinct subfamilies of SUN-domain proteins in Arabidopsis and their interactions with the novel KASH-domain protein AtTIK.</title>
        <authorList>
            <person name="Graumann K."/>
            <person name="Vanrobays E."/>
            <person name="Tutois S."/>
            <person name="Probst A.V."/>
            <person name="Evans D.E."/>
            <person name="Tatout C."/>
        </authorList>
    </citation>
    <scope>INTERACTION WITH SUN3</scope>
</reference>
<reference key="12">
    <citation type="journal article" date="2014" name="PLoS Genet.">
        <title>The kinesin AtPSS1 promotes synapsis and is required for proper crossover distribution in meiosis.</title>
        <authorList>
            <person name="Duroc Y."/>
            <person name="Lemhemdi A."/>
            <person name="Larcheveque C."/>
            <person name="Hurel A."/>
            <person name="Cuacos M."/>
            <person name="Cromer L."/>
            <person name="Horlow C."/>
            <person name="Armstrong S.J."/>
            <person name="Chelysheva L."/>
            <person name="Mercier R."/>
        </authorList>
    </citation>
    <scope>INTERACTION WITH KIN1</scope>
</reference>
<reference key="13">
    <citation type="journal article" date="2015" name="J. Exp. Bot.">
        <title>The plant nuclear envelope as a multifunctional platform LINCed by SUN and KASH.</title>
        <authorList>
            <person name="Zhou X."/>
            <person name="Graumann K."/>
            <person name="Meier I."/>
        </authorList>
    </citation>
    <scope>REVIEW</scope>
</reference>
<reference key="14">
    <citation type="journal article" date="2015" name="Nucleus">
        <title>Plant nuclear shape is independently determined by the SUN-WIP-WIT2-myosin XI-i complex and CRWN1.</title>
        <authorList>
            <person name="Zhou X."/>
            <person name="Groves N.R."/>
            <person name="Meier I."/>
        </authorList>
    </citation>
    <scope>FUNCTION</scope>
    <scope>INTERACTION WITH WIT2</scope>
    <scope>SUBUNIT</scope>
</reference>
<proteinExistence type="evidence at protein level"/>